<comment type="function">
    <text>Inhibits Y-organs where molting hormone (ecdysteroid) is secreted. A molting cycle is initiated when MIH secretion diminishes or stops. Also has significant hyperglycemic hormone (CHH) activity.</text>
</comment>
<comment type="subcellular location">
    <subcellularLocation>
        <location>Secreted</location>
    </subcellularLocation>
</comment>
<comment type="mass spectrometry" mass="9193.3" error="0.53" method="Electrospray" evidence="2"/>
<comment type="similarity">
    <text evidence="3">Belongs to the arthropod CHH/MIH/GIH/VIH hormone family.</text>
</comment>
<evidence type="ECO:0000250" key="1"/>
<evidence type="ECO:0000269" key="2">
    <source>
    </source>
</evidence>
<evidence type="ECO:0000305" key="3"/>
<proteinExistence type="evidence at protein level"/>
<reference key="1">
    <citation type="journal article" date="1996" name="Neuropeptides">
        <title>Determination of the amino acid sequence of the moult-inhibiting hormone from the edible crab, Cancer pagurus.</title>
        <authorList>
            <person name="Chung J.S."/>
            <person name="Wilkinson M.C."/>
            <person name="Webster S.G."/>
        </authorList>
    </citation>
    <scope>PROTEIN SEQUENCE</scope>
    <scope>MASS SPECTROMETRY</scope>
    <source>
        <tissue>Sinus gland</tissue>
    </source>
</reference>
<keyword id="KW-0903">Direct protein sequencing</keyword>
<keyword id="KW-1015">Disulfide bond</keyword>
<keyword id="KW-0372">Hormone</keyword>
<keyword id="KW-0527">Neuropeptide</keyword>
<keyword id="KW-0964">Secreted</keyword>
<dbReference type="SMR" id="P55846"/>
<dbReference type="GO" id="GO:0005576">
    <property type="term" value="C:extracellular region"/>
    <property type="evidence" value="ECO:0007669"/>
    <property type="project" value="UniProtKB-SubCell"/>
</dbReference>
<dbReference type="GO" id="GO:0005184">
    <property type="term" value="F:neuropeptide hormone activity"/>
    <property type="evidence" value="ECO:0007669"/>
    <property type="project" value="InterPro"/>
</dbReference>
<dbReference type="GO" id="GO:0007623">
    <property type="term" value="P:circadian rhythm"/>
    <property type="evidence" value="ECO:0007669"/>
    <property type="project" value="TreeGrafter"/>
</dbReference>
<dbReference type="GO" id="GO:0007218">
    <property type="term" value="P:neuropeptide signaling pathway"/>
    <property type="evidence" value="ECO:0007669"/>
    <property type="project" value="UniProtKB-KW"/>
</dbReference>
<dbReference type="Gene3D" id="1.10.2010.10">
    <property type="entry name" value="Crustacean CHH/MIH/GIH neurohormone"/>
    <property type="match status" value="1"/>
</dbReference>
<dbReference type="InterPro" id="IPR018251">
    <property type="entry name" value="Crust_neurhormone_CS"/>
</dbReference>
<dbReference type="InterPro" id="IPR031098">
    <property type="entry name" value="Crust_neurohorm"/>
</dbReference>
<dbReference type="InterPro" id="IPR035957">
    <property type="entry name" value="Crust_neurohorm_sf"/>
</dbReference>
<dbReference type="InterPro" id="IPR001166">
    <property type="entry name" value="Hyperglycemic"/>
</dbReference>
<dbReference type="InterPro" id="IPR001262">
    <property type="entry name" value="Hyperglycemic2"/>
</dbReference>
<dbReference type="PANTHER" id="PTHR35981">
    <property type="entry name" value="ION TRANSPORT PEPTIDE, ISOFORM C"/>
    <property type="match status" value="1"/>
</dbReference>
<dbReference type="PANTHER" id="PTHR35981:SF2">
    <property type="entry name" value="ION TRANSPORT PEPTIDE, ISOFORM C"/>
    <property type="match status" value="1"/>
</dbReference>
<dbReference type="Pfam" id="PF01147">
    <property type="entry name" value="Crust_neurohorm"/>
    <property type="match status" value="1"/>
</dbReference>
<dbReference type="PRINTS" id="PR00549">
    <property type="entry name" value="HYPRGLYCEMC2"/>
</dbReference>
<dbReference type="PRINTS" id="PR00550">
    <property type="entry name" value="HYPRGLYCEMIC"/>
</dbReference>
<dbReference type="SUPFAM" id="SSF81778">
    <property type="entry name" value="Crustacean CHH/MIH/GIH neurohormone"/>
    <property type="match status" value="1"/>
</dbReference>
<dbReference type="PROSITE" id="PS01250">
    <property type="entry name" value="CHH_MIH_GIH"/>
    <property type="match status" value="1"/>
</dbReference>
<sequence length="78" mass="9200">RVINDDCPNLIGNRDLYKKVEWICEDCSNIFRNTGMATLCRKNCFFNEDFLWCVYATERTEEMSQLRQWVGILGAGRE</sequence>
<protein>
    <recommendedName>
        <fullName>Molt-inhibiting hormone</fullName>
        <shortName>MIH</shortName>
    </recommendedName>
</protein>
<accession>P55846</accession>
<feature type="chain" id="PRO_0000209862" description="Molt-inhibiting hormone">
    <location>
        <begin position="1"/>
        <end position="78"/>
    </location>
</feature>
<feature type="disulfide bond" evidence="1">
    <location>
        <begin position="7"/>
        <end position="44"/>
    </location>
</feature>
<feature type="disulfide bond" evidence="1">
    <location>
        <begin position="24"/>
        <end position="40"/>
    </location>
</feature>
<feature type="disulfide bond" evidence="1">
    <location>
        <begin position="27"/>
        <end position="53"/>
    </location>
</feature>
<name>MIH_CANPG</name>
<organism>
    <name type="scientific">Cancer pagurus</name>
    <name type="common">Rock crab</name>
    <dbReference type="NCBI Taxonomy" id="6755"/>
    <lineage>
        <taxon>Eukaryota</taxon>
        <taxon>Metazoa</taxon>
        <taxon>Ecdysozoa</taxon>
        <taxon>Arthropoda</taxon>
        <taxon>Crustacea</taxon>
        <taxon>Multicrustacea</taxon>
        <taxon>Malacostraca</taxon>
        <taxon>Eumalacostraca</taxon>
        <taxon>Eucarida</taxon>
        <taxon>Decapoda</taxon>
        <taxon>Pleocyemata</taxon>
        <taxon>Brachyura</taxon>
        <taxon>Eubrachyura</taxon>
        <taxon>Cancroidea</taxon>
        <taxon>Cancridae</taxon>
        <taxon>Cancer</taxon>
    </lineage>
</organism>